<comment type="function">
    <text evidence="1">Required for endonucleolytic cleavage during polyadenylation-dependent pre-mRNA 3'-end formation.</text>
</comment>
<comment type="subunit">
    <text evidence="1">Component of a pre-mRNA cleavage factor complex. Interacts directly with PCF11.</text>
</comment>
<comment type="subcellular location">
    <subcellularLocation>
        <location evidence="1">Nucleus</location>
    </subcellularLocation>
</comment>
<comment type="similarity">
    <text evidence="1">Belongs to the Clp1 family. Clp1 subfamily.</text>
</comment>
<comment type="caution">
    <text evidence="3">May lack the polyribonucleotide 5'-hydroxyl-kinase and polynucleotide 5'-hydroxyl-kinase activities that are characteristic of the human ortholog.</text>
</comment>
<dbReference type="EMBL" id="CH981525">
    <property type="protein sequence ID" value="EDK44091.1"/>
    <property type="molecule type" value="Genomic_DNA"/>
</dbReference>
<dbReference type="RefSeq" id="XP_001527441.1">
    <property type="nucleotide sequence ID" value="XM_001527391.1"/>
</dbReference>
<dbReference type="SMR" id="A5DY33"/>
<dbReference type="FunCoup" id="A5DY33">
    <property type="interactions" value="798"/>
</dbReference>
<dbReference type="STRING" id="379508.A5DY33"/>
<dbReference type="GeneID" id="5233835"/>
<dbReference type="KEGG" id="lel:PVL30_002286"/>
<dbReference type="VEuPathDB" id="FungiDB:LELG_02270"/>
<dbReference type="eggNOG" id="KOG2749">
    <property type="taxonomic scope" value="Eukaryota"/>
</dbReference>
<dbReference type="HOGENOM" id="CLU_018195_3_0_1"/>
<dbReference type="InParanoid" id="A5DY33"/>
<dbReference type="OMA" id="DITGWWP"/>
<dbReference type="OrthoDB" id="258143at2759"/>
<dbReference type="Proteomes" id="UP000001996">
    <property type="component" value="Unassembled WGS sequence"/>
</dbReference>
<dbReference type="GO" id="GO:0005849">
    <property type="term" value="C:mRNA cleavage factor complex"/>
    <property type="evidence" value="ECO:0007669"/>
    <property type="project" value="UniProtKB-UniRule"/>
</dbReference>
<dbReference type="GO" id="GO:0005524">
    <property type="term" value="F:ATP binding"/>
    <property type="evidence" value="ECO:0007669"/>
    <property type="project" value="UniProtKB-UniRule"/>
</dbReference>
<dbReference type="GO" id="GO:0051731">
    <property type="term" value="F:polynucleotide 5'-hydroxyl-kinase activity"/>
    <property type="evidence" value="ECO:0007669"/>
    <property type="project" value="InterPro"/>
</dbReference>
<dbReference type="GO" id="GO:0031124">
    <property type="term" value="P:mRNA 3'-end processing"/>
    <property type="evidence" value="ECO:0007669"/>
    <property type="project" value="UniProtKB-UniRule"/>
</dbReference>
<dbReference type="GO" id="GO:0006388">
    <property type="term" value="P:tRNA splicing, via endonucleolytic cleavage and ligation"/>
    <property type="evidence" value="ECO:0007669"/>
    <property type="project" value="TreeGrafter"/>
</dbReference>
<dbReference type="Gene3D" id="2.60.120.1030">
    <property type="entry name" value="Clp1, DNA binding domain"/>
    <property type="match status" value="1"/>
</dbReference>
<dbReference type="Gene3D" id="3.40.50.300">
    <property type="entry name" value="P-loop containing nucleotide triphosphate hydrolases"/>
    <property type="match status" value="1"/>
</dbReference>
<dbReference type="Gene3D" id="2.40.30.330">
    <property type="entry name" value="Pre-mRNA cleavage complex subunit Clp1, C-terminal domain"/>
    <property type="match status" value="1"/>
</dbReference>
<dbReference type="HAMAP" id="MF_03035">
    <property type="entry name" value="Clp1"/>
    <property type="match status" value="1"/>
</dbReference>
<dbReference type="InterPro" id="IPR028606">
    <property type="entry name" value="Clp1"/>
</dbReference>
<dbReference type="InterPro" id="IPR045116">
    <property type="entry name" value="Clp1/Grc3"/>
</dbReference>
<dbReference type="InterPro" id="IPR010655">
    <property type="entry name" value="Clp1_C"/>
</dbReference>
<dbReference type="InterPro" id="IPR038238">
    <property type="entry name" value="Clp1_C_sf"/>
</dbReference>
<dbReference type="InterPro" id="IPR032324">
    <property type="entry name" value="Clp1_N"/>
</dbReference>
<dbReference type="InterPro" id="IPR038239">
    <property type="entry name" value="Clp1_N_sf"/>
</dbReference>
<dbReference type="InterPro" id="IPR032319">
    <property type="entry name" value="CLP1_P"/>
</dbReference>
<dbReference type="InterPro" id="IPR027417">
    <property type="entry name" value="P-loop_NTPase"/>
</dbReference>
<dbReference type="PANTHER" id="PTHR12755">
    <property type="entry name" value="CLEAVAGE/POLYADENYLATION FACTOR IA SUBUNIT CLP1P"/>
    <property type="match status" value="1"/>
</dbReference>
<dbReference type="PANTHER" id="PTHR12755:SF6">
    <property type="entry name" value="POLYRIBONUCLEOTIDE 5'-HYDROXYL-KINASE CLP1"/>
    <property type="match status" value="1"/>
</dbReference>
<dbReference type="Pfam" id="PF06807">
    <property type="entry name" value="Clp1"/>
    <property type="match status" value="1"/>
</dbReference>
<dbReference type="Pfam" id="PF16573">
    <property type="entry name" value="CLP1_N"/>
    <property type="match status" value="1"/>
</dbReference>
<dbReference type="Pfam" id="PF16575">
    <property type="entry name" value="CLP1_P"/>
    <property type="match status" value="1"/>
</dbReference>
<keyword id="KW-0067">ATP-binding</keyword>
<keyword id="KW-0507">mRNA processing</keyword>
<keyword id="KW-0547">Nucleotide-binding</keyword>
<keyword id="KW-0539">Nucleus</keyword>
<keyword id="KW-1185">Reference proteome</keyword>
<reference key="1">
    <citation type="journal article" date="2009" name="Nature">
        <title>Evolution of pathogenicity and sexual reproduction in eight Candida genomes.</title>
        <authorList>
            <person name="Butler G."/>
            <person name="Rasmussen M.D."/>
            <person name="Lin M.F."/>
            <person name="Santos M.A.S."/>
            <person name="Sakthikumar S."/>
            <person name="Munro C.A."/>
            <person name="Rheinbay E."/>
            <person name="Grabherr M."/>
            <person name="Forche A."/>
            <person name="Reedy J.L."/>
            <person name="Agrafioti I."/>
            <person name="Arnaud M.B."/>
            <person name="Bates S."/>
            <person name="Brown A.J.P."/>
            <person name="Brunke S."/>
            <person name="Costanzo M.C."/>
            <person name="Fitzpatrick D.A."/>
            <person name="de Groot P.W.J."/>
            <person name="Harris D."/>
            <person name="Hoyer L.L."/>
            <person name="Hube B."/>
            <person name="Klis F.M."/>
            <person name="Kodira C."/>
            <person name="Lennard N."/>
            <person name="Logue M.E."/>
            <person name="Martin R."/>
            <person name="Neiman A.M."/>
            <person name="Nikolaou E."/>
            <person name="Quail M.A."/>
            <person name="Quinn J."/>
            <person name="Santos M.C."/>
            <person name="Schmitzberger F.F."/>
            <person name="Sherlock G."/>
            <person name="Shah P."/>
            <person name="Silverstein K.A.T."/>
            <person name="Skrzypek M.S."/>
            <person name="Soll D."/>
            <person name="Staggs R."/>
            <person name="Stansfield I."/>
            <person name="Stumpf M.P.H."/>
            <person name="Sudbery P.E."/>
            <person name="Srikantha T."/>
            <person name="Zeng Q."/>
            <person name="Berman J."/>
            <person name="Berriman M."/>
            <person name="Heitman J."/>
            <person name="Gow N.A.R."/>
            <person name="Lorenz M.C."/>
            <person name="Birren B.W."/>
            <person name="Kellis M."/>
            <person name="Cuomo C.A."/>
        </authorList>
    </citation>
    <scope>NUCLEOTIDE SEQUENCE [LARGE SCALE GENOMIC DNA]</scope>
    <source>
        <strain>ATCC 11503 / BCRC 21390 / CBS 2605 / JCM 1781 / NBRC 1676 / NRRL YB-4239</strain>
    </source>
</reference>
<accession>A5DY33</accession>
<name>CLP1_LODEL</name>
<organism>
    <name type="scientific">Lodderomyces elongisporus (strain ATCC 11503 / CBS 2605 / JCM 1781 / NBRC 1676 / NRRL YB-4239)</name>
    <name type="common">Yeast</name>
    <name type="synonym">Saccharomyces elongisporus</name>
    <dbReference type="NCBI Taxonomy" id="379508"/>
    <lineage>
        <taxon>Eukaryota</taxon>
        <taxon>Fungi</taxon>
        <taxon>Dikarya</taxon>
        <taxon>Ascomycota</taxon>
        <taxon>Saccharomycotina</taxon>
        <taxon>Pichiomycetes</taxon>
        <taxon>Debaryomycetaceae</taxon>
        <taxon>Candida/Lodderomyces clade</taxon>
        <taxon>Lodderomyces</taxon>
    </lineage>
</organism>
<gene>
    <name evidence="1" type="primary">CLP1</name>
    <name type="ORF">LELG_02270</name>
</gene>
<proteinExistence type="inferred from homology"/>
<feature type="chain" id="PRO_0000375208" description="mRNA cleavage and polyadenylation factor CLP1">
    <location>
        <begin position="1"/>
        <end position="555"/>
    </location>
</feature>
<feature type="region of interest" description="Disordered" evidence="2">
    <location>
        <begin position="431"/>
        <end position="451"/>
    </location>
</feature>
<feature type="binding site" evidence="1">
    <location>
        <position position="30"/>
    </location>
    <ligand>
        <name>ATP</name>
        <dbReference type="ChEBI" id="CHEBI:30616"/>
    </ligand>
</feature>
<feature type="binding site" evidence="1">
    <location>
        <position position="69"/>
    </location>
    <ligand>
        <name>ATP</name>
        <dbReference type="ChEBI" id="CHEBI:30616"/>
    </ligand>
</feature>
<feature type="binding site" evidence="1">
    <location>
        <begin position="156"/>
        <end position="161"/>
    </location>
    <ligand>
        <name>ATP</name>
        <dbReference type="ChEBI" id="CHEBI:30616"/>
    </ligand>
</feature>
<sequence length="555" mass="60292">MSIPGFGGTNGSLASDSSEFTQISIPPANEWRIEVPFKKLLKLKVTLGTLEINGSELPNNVELQLSGVKLPIYAPPSINKEHAKVEYKLVTNPDQSVLLSSEDEEFTQYLSDETNMDLVVNLAMYIESKRQIAKDLKTNEGDHALGPRVLILGGKYLGKTSLAKTLVSYAVKMGSSPVLVNLDPKHGVFALPGSLSATVINDSLDIECANGYGFTMTTTGSLSKSMKQPVVKNFGFSDVDENVKLYTRQIDQLGIAVLSKLEGIEDGSGSEVDGNHNKVRSSGVIVDTPPFTMKSFDIISSIVSDLKIDLIVVLGNEKMKIDLTKKLKHKIEQGSLNIIKLSKSPGVVDDVNDRFIRMTQEQTIREYFNGNHRIRLSPFKTEIDLPSSSSSASASASVSSSSSTSSSGLVIYKSVLTKEYESSMAFLPSGDDFEHITNEDENGGDGNDGDGRGIVEDIKEYYQILEDPNSSNLDNSIVAITHLPLESGSSSVTNGASGSLNMSSKRKRELLNTSVMGYIHVSKVDDEKKKMKILLPFPGVFPRNVLIATSIGYNE</sequence>
<protein>
    <recommendedName>
        <fullName evidence="1">mRNA cleavage and polyadenylation factor CLP1</fullName>
    </recommendedName>
</protein>
<evidence type="ECO:0000255" key="1">
    <source>
        <dbReference type="HAMAP-Rule" id="MF_03035"/>
    </source>
</evidence>
<evidence type="ECO:0000256" key="2">
    <source>
        <dbReference type="SAM" id="MobiDB-lite"/>
    </source>
</evidence>
<evidence type="ECO:0000305" key="3"/>